<reference key="1">
    <citation type="journal article" date="2014" name="Stand. Genomic Sci.">
        <title>Complete genome sequence of Anabaena variabilis ATCC 29413.</title>
        <authorList>
            <person name="Thiel T."/>
            <person name="Pratte B.S."/>
            <person name="Zhong J."/>
            <person name="Goodwin L."/>
            <person name="Copeland A."/>
            <person name="Lucas S."/>
            <person name="Han C."/>
            <person name="Pitluck S."/>
            <person name="Land M.L."/>
            <person name="Kyrpides N.C."/>
            <person name="Woyke T."/>
        </authorList>
    </citation>
    <scope>NUCLEOTIDE SEQUENCE [LARGE SCALE GENOMIC DNA]</scope>
    <source>
        <strain>ATCC 29413 / PCC 7937</strain>
    </source>
</reference>
<gene>
    <name evidence="1" type="primary">gpmI</name>
    <name type="ordered locus">Ava_0723</name>
</gene>
<name>GPMI_TRIV2</name>
<comment type="function">
    <text evidence="1">Catalyzes the interconversion of 2-phosphoglycerate and 3-phosphoglycerate.</text>
</comment>
<comment type="catalytic activity">
    <reaction evidence="1">
        <text>(2R)-2-phosphoglycerate = (2R)-3-phosphoglycerate</text>
        <dbReference type="Rhea" id="RHEA:15901"/>
        <dbReference type="ChEBI" id="CHEBI:58272"/>
        <dbReference type="ChEBI" id="CHEBI:58289"/>
        <dbReference type="EC" id="5.4.2.12"/>
    </reaction>
</comment>
<comment type="cofactor">
    <cofactor evidence="1">
        <name>Mn(2+)</name>
        <dbReference type="ChEBI" id="CHEBI:29035"/>
    </cofactor>
    <text evidence="1">Binds 2 manganese ions per subunit.</text>
</comment>
<comment type="pathway">
    <text evidence="1">Carbohydrate degradation; glycolysis; pyruvate from D-glyceraldehyde 3-phosphate: step 3/5.</text>
</comment>
<comment type="subunit">
    <text evidence="1">Monomer.</text>
</comment>
<comment type="similarity">
    <text evidence="1">Belongs to the BPG-independent phosphoglycerate mutase family.</text>
</comment>
<dbReference type="EC" id="5.4.2.12" evidence="1"/>
<dbReference type="EMBL" id="CP000117">
    <property type="protein sequence ID" value="ABA20347.1"/>
    <property type="molecule type" value="Genomic_DNA"/>
</dbReference>
<dbReference type="SMR" id="Q3MF89"/>
<dbReference type="STRING" id="240292.Ava_0723"/>
<dbReference type="KEGG" id="ava:Ava_0723"/>
<dbReference type="eggNOG" id="COG0696">
    <property type="taxonomic scope" value="Bacteria"/>
</dbReference>
<dbReference type="HOGENOM" id="CLU_026099_2_0_3"/>
<dbReference type="UniPathway" id="UPA00109">
    <property type="reaction ID" value="UER00186"/>
</dbReference>
<dbReference type="Proteomes" id="UP000002533">
    <property type="component" value="Chromosome"/>
</dbReference>
<dbReference type="GO" id="GO:0005829">
    <property type="term" value="C:cytosol"/>
    <property type="evidence" value="ECO:0007669"/>
    <property type="project" value="TreeGrafter"/>
</dbReference>
<dbReference type="GO" id="GO:0030145">
    <property type="term" value="F:manganese ion binding"/>
    <property type="evidence" value="ECO:0007669"/>
    <property type="project" value="UniProtKB-UniRule"/>
</dbReference>
<dbReference type="GO" id="GO:0004619">
    <property type="term" value="F:phosphoglycerate mutase activity"/>
    <property type="evidence" value="ECO:0007669"/>
    <property type="project" value="UniProtKB-EC"/>
</dbReference>
<dbReference type="GO" id="GO:0006007">
    <property type="term" value="P:glucose catabolic process"/>
    <property type="evidence" value="ECO:0007669"/>
    <property type="project" value="InterPro"/>
</dbReference>
<dbReference type="GO" id="GO:0006096">
    <property type="term" value="P:glycolytic process"/>
    <property type="evidence" value="ECO:0007669"/>
    <property type="project" value="UniProtKB-UniRule"/>
</dbReference>
<dbReference type="CDD" id="cd16010">
    <property type="entry name" value="iPGM"/>
    <property type="match status" value="1"/>
</dbReference>
<dbReference type="FunFam" id="3.40.1450.10:FF:000002">
    <property type="entry name" value="2,3-bisphosphoglycerate-independent phosphoglycerate mutase"/>
    <property type="match status" value="1"/>
</dbReference>
<dbReference type="Gene3D" id="3.40.720.10">
    <property type="entry name" value="Alkaline Phosphatase, subunit A"/>
    <property type="match status" value="1"/>
</dbReference>
<dbReference type="Gene3D" id="3.40.1450.10">
    <property type="entry name" value="BPG-independent phosphoglycerate mutase, domain B"/>
    <property type="match status" value="1"/>
</dbReference>
<dbReference type="HAMAP" id="MF_01038">
    <property type="entry name" value="GpmI"/>
    <property type="match status" value="1"/>
</dbReference>
<dbReference type="InterPro" id="IPR017850">
    <property type="entry name" value="Alkaline_phosphatase_core_sf"/>
</dbReference>
<dbReference type="InterPro" id="IPR011258">
    <property type="entry name" value="BPG-indep_PGM_N"/>
</dbReference>
<dbReference type="InterPro" id="IPR006124">
    <property type="entry name" value="Metalloenzyme"/>
</dbReference>
<dbReference type="InterPro" id="IPR036646">
    <property type="entry name" value="PGAM_B_sf"/>
</dbReference>
<dbReference type="InterPro" id="IPR005995">
    <property type="entry name" value="Pgm_bpd_ind"/>
</dbReference>
<dbReference type="NCBIfam" id="TIGR01307">
    <property type="entry name" value="pgm_bpd_ind"/>
    <property type="match status" value="1"/>
</dbReference>
<dbReference type="PANTHER" id="PTHR31637">
    <property type="entry name" value="2,3-BISPHOSPHOGLYCERATE-INDEPENDENT PHOSPHOGLYCERATE MUTASE"/>
    <property type="match status" value="1"/>
</dbReference>
<dbReference type="PANTHER" id="PTHR31637:SF0">
    <property type="entry name" value="2,3-BISPHOSPHOGLYCERATE-INDEPENDENT PHOSPHOGLYCERATE MUTASE"/>
    <property type="match status" value="1"/>
</dbReference>
<dbReference type="Pfam" id="PF06415">
    <property type="entry name" value="iPGM_N"/>
    <property type="match status" value="1"/>
</dbReference>
<dbReference type="Pfam" id="PF01676">
    <property type="entry name" value="Metalloenzyme"/>
    <property type="match status" value="1"/>
</dbReference>
<dbReference type="PIRSF" id="PIRSF001492">
    <property type="entry name" value="IPGAM"/>
    <property type="match status" value="1"/>
</dbReference>
<dbReference type="SUPFAM" id="SSF64158">
    <property type="entry name" value="2,3-Bisphosphoglycerate-independent phosphoglycerate mutase, substrate-binding domain"/>
    <property type="match status" value="1"/>
</dbReference>
<dbReference type="SUPFAM" id="SSF53649">
    <property type="entry name" value="Alkaline phosphatase-like"/>
    <property type="match status" value="1"/>
</dbReference>
<proteinExistence type="inferred from homology"/>
<sequence>MTKAPVAPVVLVILDGWGYCEETRGNAIAAAKTPVMESLWTAYPHTLIHTSGKAVGLPEGQMGNSEVGHLNIGAGRVVPQELVRISDAVEDGSILSNSALVKICQEVRNRNGKLHLVGLCSEGGVHSHITHLFGLLDLAKEQRISEVCIHAITDGRDTAPTDGINAISALEDYINHVGIGRIVTVSGRYYAMDRDRRWDRIQRAYDVMTQDGAGDGRKAVDVLQASYAEGVNDEFIVPVRIAPGTVESGDGVIFFNFRPDRSRQLTQAFVSPEFTGFARQQIKPLSFVTFTQYDSDLSVSVAFEPQNLTNILGEVIANQGLNQFRTAETEKYAHVTYFFNGGLEEPFAGEDRELVSSPMVATYDKAPAMSATAVTDTAIAAIQKGIYSLIVINYANPDMVGHTGQIEPTIQAIETVDRCLGRLLEGVSKAGGTTIITADHGNAEYMLDEAGNSWTAHTTNPVPLILVEGEKVKIPGYGTNVELRSDGKLADIAPTILDILQLPQPPEMTGRSLLQPAEYDVQSPRTRIPVGLN</sequence>
<organism>
    <name type="scientific">Trichormus variabilis (strain ATCC 29413 / PCC 7937)</name>
    <name type="common">Anabaena variabilis</name>
    <dbReference type="NCBI Taxonomy" id="240292"/>
    <lineage>
        <taxon>Bacteria</taxon>
        <taxon>Bacillati</taxon>
        <taxon>Cyanobacteriota</taxon>
        <taxon>Cyanophyceae</taxon>
        <taxon>Nostocales</taxon>
        <taxon>Nostocaceae</taxon>
        <taxon>Trichormus</taxon>
    </lineage>
</organism>
<evidence type="ECO:0000255" key="1">
    <source>
        <dbReference type="HAMAP-Rule" id="MF_01038"/>
    </source>
</evidence>
<protein>
    <recommendedName>
        <fullName evidence="1">2,3-bisphosphoglycerate-independent phosphoglycerate mutase</fullName>
        <shortName evidence="1">BPG-independent PGAM</shortName>
        <shortName evidence="1">Phosphoglyceromutase</shortName>
        <shortName evidence="1">iPGM</shortName>
        <ecNumber evidence="1">5.4.2.12</ecNumber>
    </recommendedName>
</protein>
<feature type="chain" id="PRO_1000063944" description="2,3-bisphosphoglycerate-independent phosphoglycerate mutase">
    <location>
        <begin position="1"/>
        <end position="533"/>
    </location>
</feature>
<feature type="active site" description="Phosphoserine intermediate" evidence="1">
    <location>
        <position position="65"/>
    </location>
</feature>
<feature type="binding site" evidence="1">
    <location>
        <position position="15"/>
    </location>
    <ligand>
        <name>Mn(2+)</name>
        <dbReference type="ChEBI" id="CHEBI:29035"/>
        <label>2</label>
    </ligand>
</feature>
<feature type="binding site" evidence="1">
    <location>
        <position position="65"/>
    </location>
    <ligand>
        <name>Mn(2+)</name>
        <dbReference type="ChEBI" id="CHEBI:29035"/>
        <label>2</label>
    </ligand>
</feature>
<feature type="binding site" evidence="1">
    <location>
        <position position="126"/>
    </location>
    <ligand>
        <name>substrate</name>
    </ligand>
</feature>
<feature type="binding site" evidence="1">
    <location>
        <begin position="156"/>
        <end position="157"/>
    </location>
    <ligand>
        <name>substrate</name>
    </ligand>
</feature>
<feature type="binding site" evidence="1">
    <location>
        <position position="188"/>
    </location>
    <ligand>
        <name>substrate</name>
    </ligand>
</feature>
<feature type="binding site" evidence="1">
    <location>
        <position position="194"/>
    </location>
    <ligand>
        <name>substrate</name>
    </ligand>
</feature>
<feature type="binding site" evidence="1">
    <location>
        <begin position="258"/>
        <end position="261"/>
    </location>
    <ligand>
        <name>substrate</name>
    </ligand>
</feature>
<feature type="binding site" evidence="1">
    <location>
        <position position="331"/>
    </location>
    <ligand>
        <name>substrate</name>
    </ligand>
</feature>
<feature type="binding site" evidence="1">
    <location>
        <position position="398"/>
    </location>
    <ligand>
        <name>Mn(2+)</name>
        <dbReference type="ChEBI" id="CHEBI:29035"/>
        <label>1</label>
    </ligand>
</feature>
<feature type="binding site" evidence="1">
    <location>
        <position position="402"/>
    </location>
    <ligand>
        <name>Mn(2+)</name>
        <dbReference type="ChEBI" id="CHEBI:29035"/>
        <label>1</label>
    </ligand>
</feature>
<feature type="binding site" evidence="1">
    <location>
        <position position="439"/>
    </location>
    <ligand>
        <name>Mn(2+)</name>
        <dbReference type="ChEBI" id="CHEBI:29035"/>
        <label>2</label>
    </ligand>
</feature>
<feature type="binding site" evidence="1">
    <location>
        <position position="440"/>
    </location>
    <ligand>
        <name>Mn(2+)</name>
        <dbReference type="ChEBI" id="CHEBI:29035"/>
        <label>2</label>
    </ligand>
</feature>
<feature type="binding site" evidence="1">
    <location>
        <position position="457"/>
    </location>
    <ligand>
        <name>Mn(2+)</name>
        <dbReference type="ChEBI" id="CHEBI:29035"/>
        <label>1</label>
    </ligand>
</feature>
<keyword id="KW-0324">Glycolysis</keyword>
<keyword id="KW-0413">Isomerase</keyword>
<keyword id="KW-0464">Manganese</keyword>
<keyword id="KW-0479">Metal-binding</keyword>
<accession>Q3MF89</accession>